<organism>
    <name type="scientific">Enterococcus faecalis (strain ATCC 700802 / V583)</name>
    <dbReference type="NCBI Taxonomy" id="226185"/>
    <lineage>
        <taxon>Bacteria</taxon>
        <taxon>Bacillati</taxon>
        <taxon>Bacillota</taxon>
        <taxon>Bacilli</taxon>
        <taxon>Lactobacillales</taxon>
        <taxon>Enterococcaceae</taxon>
        <taxon>Enterococcus</taxon>
    </lineage>
</organism>
<name>SYA_ENTFA</name>
<dbReference type="EC" id="6.1.1.7" evidence="1"/>
<dbReference type="EMBL" id="AE016830">
    <property type="protein sequence ID" value="AAO81170.1"/>
    <property type="molecule type" value="Genomic_DNA"/>
</dbReference>
<dbReference type="RefSeq" id="NP_815100.1">
    <property type="nucleotide sequence ID" value="NC_004668.1"/>
</dbReference>
<dbReference type="RefSeq" id="WP_002357736.1">
    <property type="nucleotide sequence ID" value="NZ_KE136528.1"/>
</dbReference>
<dbReference type="SMR" id="Q835J8"/>
<dbReference type="STRING" id="226185.EF_1379"/>
<dbReference type="EnsemblBacteria" id="AAO81170">
    <property type="protein sequence ID" value="AAO81170"/>
    <property type="gene ID" value="EF_1379"/>
</dbReference>
<dbReference type="GeneID" id="60893759"/>
<dbReference type="KEGG" id="efa:EF1379"/>
<dbReference type="PATRIC" id="fig|226185.45.peg.2121"/>
<dbReference type="eggNOG" id="COG0013">
    <property type="taxonomic scope" value="Bacteria"/>
</dbReference>
<dbReference type="HOGENOM" id="CLU_004485_1_1_9"/>
<dbReference type="Proteomes" id="UP000001415">
    <property type="component" value="Chromosome"/>
</dbReference>
<dbReference type="GO" id="GO:0005829">
    <property type="term" value="C:cytosol"/>
    <property type="evidence" value="ECO:0007669"/>
    <property type="project" value="TreeGrafter"/>
</dbReference>
<dbReference type="GO" id="GO:0004813">
    <property type="term" value="F:alanine-tRNA ligase activity"/>
    <property type="evidence" value="ECO:0007669"/>
    <property type="project" value="UniProtKB-UniRule"/>
</dbReference>
<dbReference type="GO" id="GO:0002161">
    <property type="term" value="F:aminoacyl-tRNA deacylase activity"/>
    <property type="evidence" value="ECO:0007669"/>
    <property type="project" value="TreeGrafter"/>
</dbReference>
<dbReference type="GO" id="GO:0005524">
    <property type="term" value="F:ATP binding"/>
    <property type="evidence" value="ECO:0007669"/>
    <property type="project" value="UniProtKB-UniRule"/>
</dbReference>
<dbReference type="GO" id="GO:0140096">
    <property type="term" value="F:catalytic activity, acting on a protein"/>
    <property type="evidence" value="ECO:0007669"/>
    <property type="project" value="UniProtKB-ARBA"/>
</dbReference>
<dbReference type="GO" id="GO:0016740">
    <property type="term" value="F:transferase activity"/>
    <property type="evidence" value="ECO:0007669"/>
    <property type="project" value="UniProtKB-ARBA"/>
</dbReference>
<dbReference type="GO" id="GO:0000049">
    <property type="term" value="F:tRNA binding"/>
    <property type="evidence" value="ECO:0007669"/>
    <property type="project" value="UniProtKB-KW"/>
</dbReference>
<dbReference type="GO" id="GO:0008270">
    <property type="term" value="F:zinc ion binding"/>
    <property type="evidence" value="ECO:0007669"/>
    <property type="project" value="UniProtKB-UniRule"/>
</dbReference>
<dbReference type="GO" id="GO:0006419">
    <property type="term" value="P:alanyl-tRNA aminoacylation"/>
    <property type="evidence" value="ECO:0007669"/>
    <property type="project" value="UniProtKB-UniRule"/>
</dbReference>
<dbReference type="CDD" id="cd00673">
    <property type="entry name" value="AlaRS_core"/>
    <property type="match status" value="1"/>
</dbReference>
<dbReference type="FunFam" id="3.10.310.40:FF:000001">
    <property type="entry name" value="Alanine--tRNA ligase"/>
    <property type="match status" value="1"/>
</dbReference>
<dbReference type="FunFam" id="3.30.54.20:FF:000001">
    <property type="entry name" value="Alanine--tRNA ligase"/>
    <property type="match status" value="1"/>
</dbReference>
<dbReference type="FunFam" id="3.30.930.10:FF:000046">
    <property type="entry name" value="Alanine--tRNA ligase"/>
    <property type="match status" value="1"/>
</dbReference>
<dbReference type="FunFam" id="3.30.980.10:FF:000004">
    <property type="entry name" value="Alanine--tRNA ligase, cytoplasmic"/>
    <property type="match status" value="1"/>
</dbReference>
<dbReference type="Gene3D" id="2.40.30.130">
    <property type="match status" value="1"/>
</dbReference>
<dbReference type="Gene3D" id="3.10.310.40">
    <property type="match status" value="1"/>
</dbReference>
<dbReference type="Gene3D" id="3.30.54.20">
    <property type="match status" value="1"/>
</dbReference>
<dbReference type="Gene3D" id="6.10.250.550">
    <property type="match status" value="1"/>
</dbReference>
<dbReference type="Gene3D" id="3.30.930.10">
    <property type="entry name" value="Bira Bifunctional Protein, Domain 2"/>
    <property type="match status" value="1"/>
</dbReference>
<dbReference type="Gene3D" id="3.30.980.10">
    <property type="entry name" value="Threonyl-trna Synthetase, Chain A, domain 2"/>
    <property type="match status" value="1"/>
</dbReference>
<dbReference type="HAMAP" id="MF_00036_B">
    <property type="entry name" value="Ala_tRNA_synth_B"/>
    <property type="match status" value="1"/>
</dbReference>
<dbReference type="InterPro" id="IPR045864">
    <property type="entry name" value="aa-tRNA-synth_II/BPL/LPL"/>
</dbReference>
<dbReference type="InterPro" id="IPR002318">
    <property type="entry name" value="Ala-tRNA-lgiase_IIc"/>
</dbReference>
<dbReference type="InterPro" id="IPR018162">
    <property type="entry name" value="Ala-tRNA-ligase_IIc_anticod-bd"/>
</dbReference>
<dbReference type="InterPro" id="IPR018165">
    <property type="entry name" value="Ala-tRNA-synth_IIc_core"/>
</dbReference>
<dbReference type="InterPro" id="IPR018164">
    <property type="entry name" value="Ala-tRNA-synth_IIc_N"/>
</dbReference>
<dbReference type="InterPro" id="IPR050058">
    <property type="entry name" value="Ala-tRNA_ligase"/>
</dbReference>
<dbReference type="InterPro" id="IPR023033">
    <property type="entry name" value="Ala_tRNA_ligase_euk/bac"/>
</dbReference>
<dbReference type="InterPro" id="IPR003156">
    <property type="entry name" value="DHHA1_dom"/>
</dbReference>
<dbReference type="InterPro" id="IPR018163">
    <property type="entry name" value="Thr/Ala-tRNA-synth_IIc_edit"/>
</dbReference>
<dbReference type="InterPro" id="IPR009000">
    <property type="entry name" value="Transl_B-barrel_sf"/>
</dbReference>
<dbReference type="InterPro" id="IPR012947">
    <property type="entry name" value="tRNA_SAD"/>
</dbReference>
<dbReference type="NCBIfam" id="TIGR00344">
    <property type="entry name" value="alaS"/>
    <property type="match status" value="1"/>
</dbReference>
<dbReference type="PANTHER" id="PTHR11777:SF9">
    <property type="entry name" value="ALANINE--TRNA LIGASE, CYTOPLASMIC"/>
    <property type="match status" value="1"/>
</dbReference>
<dbReference type="PANTHER" id="PTHR11777">
    <property type="entry name" value="ALANYL-TRNA SYNTHETASE"/>
    <property type="match status" value="1"/>
</dbReference>
<dbReference type="Pfam" id="PF02272">
    <property type="entry name" value="DHHA1"/>
    <property type="match status" value="1"/>
</dbReference>
<dbReference type="Pfam" id="PF01411">
    <property type="entry name" value="tRNA-synt_2c"/>
    <property type="match status" value="1"/>
</dbReference>
<dbReference type="Pfam" id="PF07973">
    <property type="entry name" value="tRNA_SAD"/>
    <property type="match status" value="1"/>
</dbReference>
<dbReference type="PRINTS" id="PR00980">
    <property type="entry name" value="TRNASYNTHALA"/>
</dbReference>
<dbReference type="SMART" id="SM00863">
    <property type="entry name" value="tRNA_SAD"/>
    <property type="match status" value="1"/>
</dbReference>
<dbReference type="SUPFAM" id="SSF55681">
    <property type="entry name" value="Class II aaRS and biotin synthetases"/>
    <property type="match status" value="1"/>
</dbReference>
<dbReference type="SUPFAM" id="SSF101353">
    <property type="entry name" value="Putative anticodon-binding domain of alanyl-tRNA synthetase (AlaRS)"/>
    <property type="match status" value="1"/>
</dbReference>
<dbReference type="SUPFAM" id="SSF55186">
    <property type="entry name" value="ThrRS/AlaRS common domain"/>
    <property type="match status" value="1"/>
</dbReference>
<dbReference type="SUPFAM" id="SSF50447">
    <property type="entry name" value="Translation proteins"/>
    <property type="match status" value="1"/>
</dbReference>
<dbReference type="PROSITE" id="PS50860">
    <property type="entry name" value="AA_TRNA_LIGASE_II_ALA"/>
    <property type="match status" value="1"/>
</dbReference>
<feature type="chain" id="PRO_0000075111" description="Alanine--tRNA ligase">
    <location>
        <begin position="1"/>
        <end position="880"/>
    </location>
</feature>
<feature type="binding site" evidence="1">
    <location>
        <position position="568"/>
    </location>
    <ligand>
        <name>Zn(2+)</name>
        <dbReference type="ChEBI" id="CHEBI:29105"/>
    </ligand>
</feature>
<feature type="binding site" evidence="1">
    <location>
        <position position="572"/>
    </location>
    <ligand>
        <name>Zn(2+)</name>
        <dbReference type="ChEBI" id="CHEBI:29105"/>
    </ligand>
</feature>
<feature type="binding site" evidence="1">
    <location>
        <position position="670"/>
    </location>
    <ligand>
        <name>Zn(2+)</name>
        <dbReference type="ChEBI" id="CHEBI:29105"/>
    </ligand>
</feature>
<feature type="binding site" evidence="1">
    <location>
        <position position="674"/>
    </location>
    <ligand>
        <name>Zn(2+)</name>
        <dbReference type="ChEBI" id="CHEBI:29105"/>
    </ligand>
</feature>
<sequence>MKELTSSQVRQMYLDFFKSKGHSVEPSASLVPVNDPTLLWINSGVATLKKYFDGSVVPENPRITNAQKSIRTNDIENVGKTARHHTMFEMLGNFSIGDYFKNEAIHWAWEFLTGAEWLAFDPEKLYVTVYPKDTEAKRIWRDEVGLSEDHIIDVEDNFWDIGAGPSGPDTEIFYDRGEEFLDIPEDDPENYPGGENERYLEIWNLVFSEFNHTPEDTYEPLPHKNIDTGMGLERVVSIIQDAPTNFETDLFMPIIHAVEALGTNVKYGDAPQTDVSFKVIADHIRALSFAIGDGALPSNEGRGYVLRRLLRRAVMHGKKLGINEAFLYKLVPVVGEIMVSYYPEVLQQKDFIEKVVRTEEERFHETINEGLSMLNEVIKEVKDAKGDTLDGKIIFKLYDTFGFPVELTEEVAEDEGLKVDHAGFETEMEAQRERARSARSKETSMGVQSALLTDIKVESKFVGYTELTHDSELFVIIQGDALVNEASAGTAELIFAETPFYAEMGGQIADRGYVKNTAGEVVANVVDVKKAPNGQFLHKVEVLAPLAEGQIYQLQVDERMRTRILKNHTATHLLHRALKDVLGEHANQAGSLVAPGHLRFDFTHFGQVTSEELARMEAIVNEKIWEAIPVVTIETDIDTAKNMGAMALFGEKYGKEVRVVNIGDYSIELCGGTHVANTEDIGIFKIVSESGIGAGVRRIEAVTSKEAYQLLQEEERQLKEIATLVKSPQLKEVVTKTEQLQQQLRDLQKENEQLAGKLANQQAGDIFKDVKDINGVRYIAAQVNVKDMNQLRQLADQWKQKELSDVLVLATAQDEKVSLLAAMTKDMNGKGLKAGDLIKAIAPKVGGGGGGRPDMAQAGGKNPAGIADALAEVENWLANA</sequence>
<keyword id="KW-0030">Aminoacyl-tRNA synthetase</keyword>
<keyword id="KW-0067">ATP-binding</keyword>
<keyword id="KW-0963">Cytoplasm</keyword>
<keyword id="KW-0436">Ligase</keyword>
<keyword id="KW-0479">Metal-binding</keyword>
<keyword id="KW-0547">Nucleotide-binding</keyword>
<keyword id="KW-0648">Protein biosynthesis</keyword>
<keyword id="KW-1185">Reference proteome</keyword>
<keyword id="KW-0694">RNA-binding</keyword>
<keyword id="KW-0820">tRNA-binding</keyword>
<keyword id="KW-0862">Zinc</keyword>
<evidence type="ECO:0000255" key="1">
    <source>
        <dbReference type="HAMAP-Rule" id="MF_00036"/>
    </source>
</evidence>
<protein>
    <recommendedName>
        <fullName evidence="1">Alanine--tRNA ligase</fullName>
        <ecNumber evidence="1">6.1.1.7</ecNumber>
    </recommendedName>
    <alternativeName>
        <fullName evidence="1">Alanyl-tRNA synthetase</fullName>
        <shortName evidence="1">AlaRS</shortName>
    </alternativeName>
</protein>
<gene>
    <name evidence="1" type="primary">alaS</name>
    <name type="ordered locus">EF_1379</name>
</gene>
<comment type="function">
    <text evidence="1">Catalyzes the attachment of alanine to tRNA(Ala) in a two-step reaction: alanine is first activated by ATP to form Ala-AMP and then transferred to the acceptor end of tRNA(Ala). Also edits incorrectly charged Ser-tRNA(Ala) and Gly-tRNA(Ala) via its editing domain.</text>
</comment>
<comment type="catalytic activity">
    <reaction evidence="1">
        <text>tRNA(Ala) + L-alanine + ATP = L-alanyl-tRNA(Ala) + AMP + diphosphate</text>
        <dbReference type="Rhea" id="RHEA:12540"/>
        <dbReference type="Rhea" id="RHEA-COMP:9657"/>
        <dbReference type="Rhea" id="RHEA-COMP:9923"/>
        <dbReference type="ChEBI" id="CHEBI:30616"/>
        <dbReference type="ChEBI" id="CHEBI:33019"/>
        <dbReference type="ChEBI" id="CHEBI:57972"/>
        <dbReference type="ChEBI" id="CHEBI:78442"/>
        <dbReference type="ChEBI" id="CHEBI:78497"/>
        <dbReference type="ChEBI" id="CHEBI:456215"/>
        <dbReference type="EC" id="6.1.1.7"/>
    </reaction>
</comment>
<comment type="cofactor">
    <cofactor evidence="1">
        <name>Zn(2+)</name>
        <dbReference type="ChEBI" id="CHEBI:29105"/>
    </cofactor>
    <text evidence="1">Binds 1 zinc ion per subunit.</text>
</comment>
<comment type="subcellular location">
    <subcellularLocation>
        <location evidence="1">Cytoplasm</location>
    </subcellularLocation>
</comment>
<comment type="domain">
    <text evidence="1">Consists of three domains; the N-terminal catalytic domain, the editing domain and the C-terminal C-Ala domain. The editing domain removes incorrectly charged amino acids, while the C-Ala domain, along with tRNA(Ala), serves as a bridge to cooperatively bring together the editing and aminoacylation centers thus stimulating deacylation of misacylated tRNAs.</text>
</comment>
<comment type="similarity">
    <text evidence="1">Belongs to the class-II aminoacyl-tRNA synthetase family.</text>
</comment>
<proteinExistence type="inferred from homology"/>
<reference key="1">
    <citation type="journal article" date="2003" name="Science">
        <title>Role of mobile DNA in the evolution of vancomycin-resistant Enterococcus faecalis.</title>
        <authorList>
            <person name="Paulsen I.T."/>
            <person name="Banerjei L."/>
            <person name="Myers G.S.A."/>
            <person name="Nelson K.E."/>
            <person name="Seshadri R."/>
            <person name="Read T.D."/>
            <person name="Fouts D.E."/>
            <person name="Eisen J.A."/>
            <person name="Gill S.R."/>
            <person name="Heidelberg J.F."/>
            <person name="Tettelin H."/>
            <person name="Dodson R.J."/>
            <person name="Umayam L.A."/>
            <person name="Brinkac L.M."/>
            <person name="Beanan M.J."/>
            <person name="Daugherty S.C."/>
            <person name="DeBoy R.T."/>
            <person name="Durkin S.A."/>
            <person name="Kolonay J.F."/>
            <person name="Madupu R."/>
            <person name="Nelson W.C."/>
            <person name="Vamathevan J.J."/>
            <person name="Tran B."/>
            <person name="Upton J."/>
            <person name="Hansen T."/>
            <person name="Shetty J."/>
            <person name="Khouri H.M."/>
            <person name="Utterback T.R."/>
            <person name="Radune D."/>
            <person name="Ketchum K.A."/>
            <person name="Dougherty B.A."/>
            <person name="Fraser C.M."/>
        </authorList>
    </citation>
    <scope>NUCLEOTIDE SEQUENCE [LARGE SCALE GENOMIC DNA]</scope>
    <source>
        <strain>ATCC 700802 / V583</strain>
    </source>
</reference>
<accession>Q835J8</accession>